<sequence length="172" mass="18619">MADARSLHRPLGFGVAAIVLLLDQISKWAIMGPVALRERGLIEITGFFDLRWVENYGVSMGFLIAGSDRERWLLVAGTALIAAGIVAWIWREKAKGDVVALGLVLGGAIGNIADRTRLGYVADFLDPHIGDWHPFLVFNVADAAITIGVLILVLRALLVREPKVPAENVDAV</sequence>
<protein>
    <recommendedName>
        <fullName evidence="1">Lipoprotein signal peptidase</fullName>
        <ecNumber evidence="1">3.4.23.36</ecNumber>
    </recommendedName>
    <alternativeName>
        <fullName evidence="1">Prolipoprotein signal peptidase</fullName>
    </alternativeName>
    <alternativeName>
        <fullName evidence="1">Signal peptidase II</fullName>
        <shortName evidence="1">SPase II</shortName>
    </alternativeName>
</protein>
<reference key="1">
    <citation type="journal article" date="2010" name="J. Bacteriol.">
        <title>Genome sequence of the dioxin-mineralizing bacterium Sphingomonas wittichii RW1.</title>
        <authorList>
            <person name="Miller T.R."/>
            <person name="Delcher A.L."/>
            <person name="Salzberg S.L."/>
            <person name="Saunders E."/>
            <person name="Detter J.C."/>
            <person name="Halden R.U."/>
        </authorList>
    </citation>
    <scope>NUCLEOTIDE SEQUENCE [LARGE SCALE GENOMIC DNA]</scope>
    <source>
        <strain>DSM 6014 / CCUG 31198 / JCM 15750 / NBRC 105917 / EY 4224 / RW1</strain>
    </source>
</reference>
<name>LSPA_RHIWR</name>
<comment type="function">
    <text evidence="1">This protein specifically catalyzes the removal of signal peptides from prolipoproteins.</text>
</comment>
<comment type="catalytic activity">
    <reaction evidence="1">
        <text>Release of signal peptides from bacterial membrane prolipoproteins. Hydrolyzes -Xaa-Yaa-Zaa-|-(S,diacylglyceryl)Cys-, in which Xaa is hydrophobic (preferably Leu), and Yaa (Ala or Ser) and Zaa (Gly or Ala) have small, neutral side chains.</text>
        <dbReference type="EC" id="3.4.23.36"/>
    </reaction>
</comment>
<comment type="pathway">
    <text evidence="1">Protein modification; lipoprotein biosynthesis (signal peptide cleavage).</text>
</comment>
<comment type="subcellular location">
    <subcellularLocation>
        <location evidence="1">Cell inner membrane</location>
        <topology evidence="1">Multi-pass membrane protein</topology>
    </subcellularLocation>
</comment>
<comment type="similarity">
    <text evidence="1">Belongs to the peptidase A8 family.</text>
</comment>
<keyword id="KW-0064">Aspartyl protease</keyword>
<keyword id="KW-0997">Cell inner membrane</keyword>
<keyword id="KW-1003">Cell membrane</keyword>
<keyword id="KW-0378">Hydrolase</keyword>
<keyword id="KW-0472">Membrane</keyword>
<keyword id="KW-0645">Protease</keyword>
<keyword id="KW-1185">Reference proteome</keyword>
<keyword id="KW-0812">Transmembrane</keyword>
<keyword id="KW-1133">Transmembrane helix</keyword>
<accession>A5VCW2</accession>
<dbReference type="EC" id="3.4.23.36" evidence="1"/>
<dbReference type="EMBL" id="CP000699">
    <property type="protein sequence ID" value="ABQ70128.1"/>
    <property type="molecule type" value="Genomic_DNA"/>
</dbReference>
<dbReference type="SMR" id="A5VCW2"/>
<dbReference type="STRING" id="392499.Swit_3783"/>
<dbReference type="PaxDb" id="392499-Swit_3783"/>
<dbReference type="KEGG" id="swi:Swit_3783"/>
<dbReference type="eggNOG" id="COG0597">
    <property type="taxonomic scope" value="Bacteria"/>
</dbReference>
<dbReference type="HOGENOM" id="CLU_083252_4_3_5"/>
<dbReference type="OrthoDB" id="9810259at2"/>
<dbReference type="UniPathway" id="UPA00665"/>
<dbReference type="Proteomes" id="UP000001989">
    <property type="component" value="Chromosome"/>
</dbReference>
<dbReference type="GO" id="GO:0005886">
    <property type="term" value="C:plasma membrane"/>
    <property type="evidence" value="ECO:0007669"/>
    <property type="project" value="UniProtKB-SubCell"/>
</dbReference>
<dbReference type="GO" id="GO:0004190">
    <property type="term" value="F:aspartic-type endopeptidase activity"/>
    <property type="evidence" value="ECO:0007669"/>
    <property type="project" value="UniProtKB-UniRule"/>
</dbReference>
<dbReference type="GO" id="GO:0006508">
    <property type="term" value="P:proteolysis"/>
    <property type="evidence" value="ECO:0007669"/>
    <property type="project" value="UniProtKB-KW"/>
</dbReference>
<dbReference type="HAMAP" id="MF_00161">
    <property type="entry name" value="LspA"/>
    <property type="match status" value="1"/>
</dbReference>
<dbReference type="InterPro" id="IPR001872">
    <property type="entry name" value="Peptidase_A8"/>
</dbReference>
<dbReference type="NCBIfam" id="TIGR00077">
    <property type="entry name" value="lspA"/>
    <property type="match status" value="1"/>
</dbReference>
<dbReference type="PANTHER" id="PTHR33695">
    <property type="entry name" value="LIPOPROTEIN SIGNAL PEPTIDASE"/>
    <property type="match status" value="1"/>
</dbReference>
<dbReference type="PANTHER" id="PTHR33695:SF1">
    <property type="entry name" value="LIPOPROTEIN SIGNAL PEPTIDASE"/>
    <property type="match status" value="1"/>
</dbReference>
<dbReference type="Pfam" id="PF01252">
    <property type="entry name" value="Peptidase_A8"/>
    <property type="match status" value="1"/>
</dbReference>
<dbReference type="PRINTS" id="PR00781">
    <property type="entry name" value="LIPOSIGPTASE"/>
</dbReference>
<gene>
    <name evidence="1" type="primary">lspA</name>
    <name type="ordered locus">Swit_3783</name>
</gene>
<feature type="chain" id="PRO_1000038825" description="Lipoprotein signal peptidase">
    <location>
        <begin position="1"/>
        <end position="172"/>
    </location>
</feature>
<feature type="transmembrane region" description="Helical" evidence="1">
    <location>
        <begin position="70"/>
        <end position="90"/>
    </location>
</feature>
<feature type="transmembrane region" description="Helical" evidence="1">
    <location>
        <begin position="94"/>
        <end position="114"/>
    </location>
</feature>
<feature type="transmembrane region" description="Helical" evidence="1">
    <location>
        <begin position="134"/>
        <end position="154"/>
    </location>
</feature>
<feature type="active site" evidence="1">
    <location>
        <position position="123"/>
    </location>
</feature>
<feature type="active site" evidence="1">
    <location>
        <position position="142"/>
    </location>
</feature>
<organism>
    <name type="scientific">Rhizorhabdus wittichii (strain DSM 6014 / CCUG 31198 / JCM 15750 / NBRC 105917 / EY 4224 / RW1)</name>
    <name type="common">Sphingomonas wittichii</name>
    <dbReference type="NCBI Taxonomy" id="392499"/>
    <lineage>
        <taxon>Bacteria</taxon>
        <taxon>Pseudomonadati</taxon>
        <taxon>Pseudomonadota</taxon>
        <taxon>Alphaproteobacteria</taxon>
        <taxon>Sphingomonadales</taxon>
        <taxon>Sphingomonadaceae</taxon>
        <taxon>Rhizorhabdus</taxon>
    </lineage>
</organism>
<evidence type="ECO:0000255" key="1">
    <source>
        <dbReference type="HAMAP-Rule" id="MF_00161"/>
    </source>
</evidence>
<proteinExistence type="inferred from homology"/>